<comment type="function">
    <text evidence="1">Plays an important role in the de novo pathway of purine nucleotide biosynthesis. Catalyzes the first committed step in the biosynthesis of AMP from IMP.</text>
</comment>
<comment type="catalytic activity">
    <reaction evidence="1">
        <text>IMP + L-aspartate + GTP = N(6)-(1,2-dicarboxyethyl)-AMP + GDP + phosphate + 2 H(+)</text>
        <dbReference type="Rhea" id="RHEA:15753"/>
        <dbReference type="ChEBI" id="CHEBI:15378"/>
        <dbReference type="ChEBI" id="CHEBI:29991"/>
        <dbReference type="ChEBI" id="CHEBI:37565"/>
        <dbReference type="ChEBI" id="CHEBI:43474"/>
        <dbReference type="ChEBI" id="CHEBI:57567"/>
        <dbReference type="ChEBI" id="CHEBI:58053"/>
        <dbReference type="ChEBI" id="CHEBI:58189"/>
        <dbReference type="EC" id="6.3.4.4"/>
    </reaction>
</comment>
<comment type="cofactor">
    <cofactor evidence="1">
        <name>Mg(2+)</name>
        <dbReference type="ChEBI" id="CHEBI:18420"/>
    </cofactor>
    <text evidence="1">Binds 1 Mg(2+) ion per subunit.</text>
</comment>
<comment type="pathway">
    <text evidence="1">Purine metabolism; AMP biosynthesis via de novo pathway; AMP from IMP: step 1/2.</text>
</comment>
<comment type="subunit">
    <text evidence="1">Homodimer.</text>
</comment>
<comment type="subcellular location">
    <subcellularLocation>
        <location evidence="1">Cytoplasm</location>
    </subcellularLocation>
</comment>
<comment type="similarity">
    <text evidence="1">Belongs to the adenylosuccinate synthetase family.</text>
</comment>
<evidence type="ECO:0000255" key="1">
    <source>
        <dbReference type="HAMAP-Rule" id="MF_00011"/>
    </source>
</evidence>
<feature type="chain" id="PRO_1000089335" description="Adenylosuccinate synthetase">
    <location>
        <begin position="1"/>
        <end position="432"/>
    </location>
</feature>
<feature type="active site" description="Proton acceptor" evidence="1">
    <location>
        <position position="14"/>
    </location>
</feature>
<feature type="active site" description="Proton donor" evidence="1">
    <location>
        <position position="42"/>
    </location>
</feature>
<feature type="binding site" evidence="1">
    <location>
        <begin position="13"/>
        <end position="19"/>
    </location>
    <ligand>
        <name>GTP</name>
        <dbReference type="ChEBI" id="CHEBI:37565"/>
    </ligand>
</feature>
<feature type="binding site" description="in other chain" evidence="1">
    <location>
        <begin position="14"/>
        <end position="17"/>
    </location>
    <ligand>
        <name>IMP</name>
        <dbReference type="ChEBI" id="CHEBI:58053"/>
        <note>ligand shared between dimeric partners</note>
    </ligand>
</feature>
<feature type="binding site" evidence="1">
    <location>
        <position position="14"/>
    </location>
    <ligand>
        <name>Mg(2+)</name>
        <dbReference type="ChEBI" id="CHEBI:18420"/>
    </ligand>
</feature>
<feature type="binding site" description="in other chain" evidence="1">
    <location>
        <begin position="39"/>
        <end position="42"/>
    </location>
    <ligand>
        <name>IMP</name>
        <dbReference type="ChEBI" id="CHEBI:58053"/>
        <note>ligand shared between dimeric partners</note>
    </ligand>
</feature>
<feature type="binding site" evidence="1">
    <location>
        <begin position="41"/>
        <end position="43"/>
    </location>
    <ligand>
        <name>GTP</name>
        <dbReference type="ChEBI" id="CHEBI:37565"/>
    </ligand>
</feature>
<feature type="binding site" evidence="1">
    <location>
        <position position="41"/>
    </location>
    <ligand>
        <name>Mg(2+)</name>
        <dbReference type="ChEBI" id="CHEBI:18420"/>
    </ligand>
</feature>
<feature type="binding site" description="in other chain" evidence="1">
    <location>
        <position position="130"/>
    </location>
    <ligand>
        <name>IMP</name>
        <dbReference type="ChEBI" id="CHEBI:58053"/>
        <note>ligand shared between dimeric partners</note>
    </ligand>
</feature>
<feature type="binding site" evidence="1">
    <location>
        <position position="144"/>
    </location>
    <ligand>
        <name>IMP</name>
        <dbReference type="ChEBI" id="CHEBI:58053"/>
        <note>ligand shared between dimeric partners</note>
    </ligand>
</feature>
<feature type="binding site" description="in other chain" evidence="1">
    <location>
        <position position="225"/>
    </location>
    <ligand>
        <name>IMP</name>
        <dbReference type="ChEBI" id="CHEBI:58053"/>
        <note>ligand shared between dimeric partners</note>
    </ligand>
</feature>
<feature type="binding site" description="in other chain" evidence="1">
    <location>
        <position position="240"/>
    </location>
    <ligand>
        <name>IMP</name>
        <dbReference type="ChEBI" id="CHEBI:58053"/>
        <note>ligand shared between dimeric partners</note>
    </ligand>
</feature>
<feature type="binding site" evidence="1">
    <location>
        <begin position="300"/>
        <end position="306"/>
    </location>
    <ligand>
        <name>substrate</name>
    </ligand>
</feature>
<feature type="binding site" description="in other chain" evidence="1">
    <location>
        <position position="304"/>
    </location>
    <ligand>
        <name>IMP</name>
        <dbReference type="ChEBI" id="CHEBI:58053"/>
        <note>ligand shared between dimeric partners</note>
    </ligand>
</feature>
<feature type="binding site" evidence="1">
    <location>
        <position position="306"/>
    </location>
    <ligand>
        <name>GTP</name>
        <dbReference type="ChEBI" id="CHEBI:37565"/>
    </ligand>
</feature>
<feature type="binding site" evidence="1">
    <location>
        <begin position="332"/>
        <end position="334"/>
    </location>
    <ligand>
        <name>GTP</name>
        <dbReference type="ChEBI" id="CHEBI:37565"/>
    </ligand>
</feature>
<feature type="binding site" evidence="1">
    <location>
        <begin position="415"/>
        <end position="417"/>
    </location>
    <ligand>
        <name>GTP</name>
        <dbReference type="ChEBI" id="CHEBI:37565"/>
    </ligand>
</feature>
<organism>
    <name type="scientific">Salmonella gallinarum (strain 287/91 / NCTC 13346)</name>
    <dbReference type="NCBI Taxonomy" id="550538"/>
    <lineage>
        <taxon>Bacteria</taxon>
        <taxon>Pseudomonadati</taxon>
        <taxon>Pseudomonadota</taxon>
        <taxon>Gammaproteobacteria</taxon>
        <taxon>Enterobacterales</taxon>
        <taxon>Enterobacteriaceae</taxon>
        <taxon>Salmonella</taxon>
    </lineage>
</organism>
<proteinExistence type="inferred from homology"/>
<gene>
    <name evidence="1" type="primary">purA</name>
    <name type="ordered locus">SG4206</name>
</gene>
<sequence length="432" mass="47405">MGNNVVVLGTQWGDEGKGKIVDLLTERAKYVVRYQGGHNAGHTLVINGEKTVLHLIPSGILRENVTSIIGNGVVLSPSALMKEMKELEDRGIPVRERLLLSEACPLILDYHVALDNAREKARGAKAIGTTGRGIGPAYEDKVARRGLRVGDLFDKETFAEKLKEVMEYHNFQLVNYYKVEAVDYQKVLDDTMAVADILTSMVVDVSDLLDQARQRGDFVMFEGAQGTLLDIDHGTYPYVTSSNTTAGGVATGSGLGPRYVDYVLGILKAYSTRVGAGPFPTELFDETGEFLCKQGNEYGATTGRRRRTGWLDTVAVRRAVQLNSLSGFCLTKLDVLDGLKEVKLCVAYRMPDGREVTTTPLAADDWKGVEPIYETMPGWSESTFGVKDRSGLPQAALNYIKRIEELTGVPIDIISTGPDRTETMILRDPFDA</sequence>
<protein>
    <recommendedName>
        <fullName evidence="1">Adenylosuccinate synthetase</fullName>
        <shortName evidence="1">AMPSase</shortName>
        <shortName evidence="1">AdSS</shortName>
        <ecNumber evidence="1">6.3.4.4</ecNumber>
    </recommendedName>
    <alternativeName>
        <fullName evidence="1">IMP--aspartate ligase</fullName>
    </alternativeName>
</protein>
<name>PURA_SALG2</name>
<reference key="1">
    <citation type="journal article" date="2008" name="Genome Res.">
        <title>Comparative genome analysis of Salmonella enteritidis PT4 and Salmonella gallinarum 287/91 provides insights into evolutionary and host adaptation pathways.</title>
        <authorList>
            <person name="Thomson N.R."/>
            <person name="Clayton D.J."/>
            <person name="Windhorst D."/>
            <person name="Vernikos G."/>
            <person name="Davidson S."/>
            <person name="Churcher C."/>
            <person name="Quail M.A."/>
            <person name="Stevens M."/>
            <person name="Jones M.A."/>
            <person name="Watson M."/>
            <person name="Barron A."/>
            <person name="Layton A."/>
            <person name="Pickard D."/>
            <person name="Kingsley R.A."/>
            <person name="Bignell A."/>
            <person name="Clark L."/>
            <person name="Harris B."/>
            <person name="Ormond D."/>
            <person name="Abdellah Z."/>
            <person name="Brooks K."/>
            <person name="Cherevach I."/>
            <person name="Chillingworth T."/>
            <person name="Woodward J."/>
            <person name="Norberczak H."/>
            <person name="Lord A."/>
            <person name="Arrowsmith C."/>
            <person name="Jagels K."/>
            <person name="Moule S."/>
            <person name="Mungall K."/>
            <person name="Saunders M."/>
            <person name="Whitehead S."/>
            <person name="Chabalgoity J.A."/>
            <person name="Maskell D."/>
            <person name="Humphreys T."/>
            <person name="Roberts M."/>
            <person name="Barrow P.A."/>
            <person name="Dougan G."/>
            <person name="Parkhill J."/>
        </authorList>
    </citation>
    <scope>NUCLEOTIDE SEQUENCE [LARGE SCALE GENOMIC DNA]</scope>
    <source>
        <strain>287/91 / NCTC 13346</strain>
    </source>
</reference>
<dbReference type="EC" id="6.3.4.4" evidence="1"/>
<dbReference type="EMBL" id="AM933173">
    <property type="protein sequence ID" value="CAR39971.1"/>
    <property type="molecule type" value="Genomic_DNA"/>
</dbReference>
<dbReference type="RefSeq" id="WP_000527976.1">
    <property type="nucleotide sequence ID" value="NC_011274.1"/>
</dbReference>
<dbReference type="SMR" id="B5R9C3"/>
<dbReference type="KEGG" id="seg:SG4206"/>
<dbReference type="HOGENOM" id="CLU_029848_0_0_6"/>
<dbReference type="UniPathway" id="UPA00075">
    <property type="reaction ID" value="UER00335"/>
</dbReference>
<dbReference type="Proteomes" id="UP000008321">
    <property type="component" value="Chromosome"/>
</dbReference>
<dbReference type="GO" id="GO:0005737">
    <property type="term" value="C:cytoplasm"/>
    <property type="evidence" value="ECO:0007669"/>
    <property type="project" value="UniProtKB-SubCell"/>
</dbReference>
<dbReference type="GO" id="GO:0004019">
    <property type="term" value="F:adenylosuccinate synthase activity"/>
    <property type="evidence" value="ECO:0007669"/>
    <property type="project" value="UniProtKB-UniRule"/>
</dbReference>
<dbReference type="GO" id="GO:0005525">
    <property type="term" value="F:GTP binding"/>
    <property type="evidence" value="ECO:0007669"/>
    <property type="project" value="UniProtKB-UniRule"/>
</dbReference>
<dbReference type="GO" id="GO:0000287">
    <property type="term" value="F:magnesium ion binding"/>
    <property type="evidence" value="ECO:0007669"/>
    <property type="project" value="UniProtKB-UniRule"/>
</dbReference>
<dbReference type="GO" id="GO:0044208">
    <property type="term" value="P:'de novo' AMP biosynthetic process"/>
    <property type="evidence" value="ECO:0007669"/>
    <property type="project" value="UniProtKB-UniRule"/>
</dbReference>
<dbReference type="GO" id="GO:0046040">
    <property type="term" value="P:IMP metabolic process"/>
    <property type="evidence" value="ECO:0007669"/>
    <property type="project" value="TreeGrafter"/>
</dbReference>
<dbReference type="CDD" id="cd03108">
    <property type="entry name" value="AdSS"/>
    <property type="match status" value="1"/>
</dbReference>
<dbReference type="FunFam" id="1.10.300.10:FF:000001">
    <property type="entry name" value="Adenylosuccinate synthetase"/>
    <property type="match status" value="1"/>
</dbReference>
<dbReference type="FunFam" id="3.90.170.10:FF:000001">
    <property type="entry name" value="Adenylosuccinate synthetase"/>
    <property type="match status" value="1"/>
</dbReference>
<dbReference type="Gene3D" id="3.40.440.10">
    <property type="entry name" value="Adenylosuccinate Synthetase, subunit A, domain 1"/>
    <property type="match status" value="1"/>
</dbReference>
<dbReference type="Gene3D" id="1.10.300.10">
    <property type="entry name" value="Adenylosuccinate Synthetase, subunit A, domain 2"/>
    <property type="match status" value="1"/>
</dbReference>
<dbReference type="Gene3D" id="3.90.170.10">
    <property type="entry name" value="Adenylosuccinate Synthetase, subunit A, domain 3"/>
    <property type="match status" value="1"/>
</dbReference>
<dbReference type="HAMAP" id="MF_00011">
    <property type="entry name" value="Adenylosucc_synth"/>
    <property type="match status" value="1"/>
</dbReference>
<dbReference type="InterPro" id="IPR018220">
    <property type="entry name" value="Adenylosuccin_syn_GTP-bd"/>
</dbReference>
<dbReference type="InterPro" id="IPR033128">
    <property type="entry name" value="Adenylosuccin_syn_Lys_AS"/>
</dbReference>
<dbReference type="InterPro" id="IPR042109">
    <property type="entry name" value="Adenylosuccinate_synth_dom1"/>
</dbReference>
<dbReference type="InterPro" id="IPR042110">
    <property type="entry name" value="Adenylosuccinate_synth_dom2"/>
</dbReference>
<dbReference type="InterPro" id="IPR042111">
    <property type="entry name" value="Adenylosuccinate_synth_dom3"/>
</dbReference>
<dbReference type="InterPro" id="IPR001114">
    <property type="entry name" value="Adenylosuccinate_synthetase"/>
</dbReference>
<dbReference type="InterPro" id="IPR027417">
    <property type="entry name" value="P-loop_NTPase"/>
</dbReference>
<dbReference type="NCBIfam" id="NF002223">
    <property type="entry name" value="PRK01117.1"/>
    <property type="match status" value="1"/>
</dbReference>
<dbReference type="NCBIfam" id="TIGR00184">
    <property type="entry name" value="purA"/>
    <property type="match status" value="1"/>
</dbReference>
<dbReference type="PANTHER" id="PTHR11846">
    <property type="entry name" value="ADENYLOSUCCINATE SYNTHETASE"/>
    <property type="match status" value="1"/>
</dbReference>
<dbReference type="PANTHER" id="PTHR11846:SF0">
    <property type="entry name" value="ADENYLOSUCCINATE SYNTHETASE"/>
    <property type="match status" value="1"/>
</dbReference>
<dbReference type="Pfam" id="PF00709">
    <property type="entry name" value="Adenylsucc_synt"/>
    <property type="match status" value="1"/>
</dbReference>
<dbReference type="SMART" id="SM00788">
    <property type="entry name" value="Adenylsucc_synt"/>
    <property type="match status" value="1"/>
</dbReference>
<dbReference type="SUPFAM" id="SSF52540">
    <property type="entry name" value="P-loop containing nucleoside triphosphate hydrolases"/>
    <property type="match status" value="1"/>
</dbReference>
<dbReference type="PROSITE" id="PS01266">
    <property type="entry name" value="ADENYLOSUCCIN_SYN_1"/>
    <property type="match status" value="1"/>
</dbReference>
<dbReference type="PROSITE" id="PS00513">
    <property type="entry name" value="ADENYLOSUCCIN_SYN_2"/>
    <property type="match status" value="1"/>
</dbReference>
<keyword id="KW-0963">Cytoplasm</keyword>
<keyword id="KW-0342">GTP-binding</keyword>
<keyword id="KW-0436">Ligase</keyword>
<keyword id="KW-0460">Magnesium</keyword>
<keyword id="KW-0479">Metal-binding</keyword>
<keyword id="KW-0547">Nucleotide-binding</keyword>
<keyword id="KW-0658">Purine biosynthesis</keyword>
<accession>B5R9C3</accession>